<sequence length="61" mass="6642">MDTKLLDILACPITKGPLKLSADKTELISKGAGLAYPIRDGIPVMLESEARTLTDDERLDK</sequence>
<accession>Q88LM8</accession>
<comment type="similarity">
    <text evidence="1">Belongs to the UPF0434 family.</text>
</comment>
<gene>
    <name type="ordered locus">PP_1901</name>
</gene>
<organism>
    <name type="scientific">Pseudomonas putida (strain ATCC 47054 / DSM 6125 / CFBP 8728 / NCIMB 11950 / KT2440)</name>
    <dbReference type="NCBI Taxonomy" id="160488"/>
    <lineage>
        <taxon>Bacteria</taxon>
        <taxon>Pseudomonadati</taxon>
        <taxon>Pseudomonadota</taxon>
        <taxon>Gammaproteobacteria</taxon>
        <taxon>Pseudomonadales</taxon>
        <taxon>Pseudomonadaceae</taxon>
        <taxon>Pseudomonas</taxon>
    </lineage>
</organism>
<keyword id="KW-1185">Reference proteome</keyword>
<reference key="1">
    <citation type="journal article" date="2002" name="Environ. Microbiol.">
        <title>Complete genome sequence and comparative analysis of the metabolically versatile Pseudomonas putida KT2440.</title>
        <authorList>
            <person name="Nelson K.E."/>
            <person name="Weinel C."/>
            <person name="Paulsen I.T."/>
            <person name="Dodson R.J."/>
            <person name="Hilbert H."/>
            <person name="Martins dos Santos V.A.P."/>
            <person name="Fouts D.E."/>
            <person name="Gill S.R."/>
            <person name="Pop M."/>
            <person name="Holmes M."/>
            <person name="Brinkac L.M."/>
            <person name="Beanan M.J."/>
            <person name="DeBoy R.T."/>
            <person name="Daugherty S.C."/>
            <person name="Kolonay J.F."/>
            <person name="Madupu R."/>
            <person name="Nelson W.C."/>
            <person name="White O."/>
            <person name="Peterson J.D."/>
            <person name="Khouri H.M."/>
            <person name="Hance I."/>
            <person name="Chris Lee P."/>
            <person name="Holtzapple E.K."/>
            <person name="Scanlan D."/>
            <person name="Tran K."/>
            <person name="Moazzez A."/>
            <person name="Utterback T.R."/>
            <person name="Rizzo M."/>
            <person name="Lee K."/>
            <person name="Kosack D."/>
            <person name="Moestl D."/>
            <person name="Wedler H."/>
            <person name="Lauber J."/>
            <person name="Stjepandic D."/>
            <person name="Hoheisel J."/>
            <person name="Straetz M."/>
            <person name="Heim S."/>
            <person name="Kiewitz C."/>
            <person name="Eisen J.A."/>
            <person name="Timmis K.N."/>
            <person name="Duesterhoeft A."/>
            <person name="Tuemmler B."/>
            <person name="Fraser C.M."/>
        </authorList>
    </citation>
    <scope>NUCLEOTIDE SEQUENCE [LARGE SCALE GENOMIC DNA]</scope>
    <source>
        <strain>ATCC 47054 / DSM 6125 / CFBP 8728 / NCIMB 11950 / KT2440</strain>
    </source>
</reference>
<name>Y1901_PSEPK</name>
<protein>
    <recommendedName>
        <fullName evidence="1">UPF0434 protein PP_1901</fullName>
    </recommendedName>
</protein>
<proteinExistence type="inferred from homology"/>
<evidence type="ECO:0000255" key="1">
    <source>
        <dbReference type="HAMAP-Rule" id="MF_01187"/>
    </source>
</evidence>
<feature type="chain" id="PRO_0000291136" description="UPF0434 protein PP_1901">
    <location>
        <begin position="1"/>
        <end position="61"/>
    </location>
</feature>
<dbReference type="EMBL" id="AE015451">
    <property type="protein sequence ID" value="AAN67520.1"/>
    <property type="molecule type" value="Genomic_DNA"/>
</dbReference>
<dbReference type="RefSeq" id="NP_744056.1">
    <property type="nucleotide sequence ID" value="NC_002947.4"/>
</dbReference>
<dbReference type="RefSeq" id="WP_003247142.1">
    <property type="nucleotide sequence ID" value="NZ_CP169744.1"/>
</dbReference>
<dbReference type="SMR" id="Q88LM8"/>
<dbReference type="STRING" id="160488.PP_1901"/>
<dbReference type="PaxDb" id="160488-PP_1901"/>
<dbReference type="KEGG" id="ppu:PP_1901"/>
<dbReference type="PATRIC" id="fig|160488.4.peg.2007"/>
<dbReference type="eggNOG" id="COG2835">
    <property type="taxonomic scope" value="Bacteria"/>
</dbReference>
<dbReference type="HOGENOM" id="CLU_155659_3_1_6"/>
<dbReference type="OrthoDB" id="9812205at2"/>
<dbReference type="PhylomeDB" id="Q88LM8"/>
<dbReference type="BioCyc" id="PPUT160488:G1G01-2012-MONOMER"/>
<dbReference type="Proteomes" id="UP000000556">
    <property type="component" value="Chromosome"/>
</dbReference>
<dbReference type="GO" id="GO:0005829">
    <property type="term" value="C:cytosol"/>
    <property type="evidence" value="ECO:0007669"/>
    <property type="project" value="TreeGrafter"/>
</dbReference>
<dbReference type="FunFam" id="2.20.25.10:FF:000002">
    <property type="entry name" value="UPF0434 protein YcaR"/>
    <property type="match status" value="1"/>
</dbReference>
<dbReference type="Gene3D" id="2.20.25.10">
    <property type="match status" value="1"/>
</dbReference>
<dbReference type="HAMAP" id="MF_01187">
    <property type="entry name" value="UPF0434"/>
    <property type="match status" value="1"/>
</dbReference>
<dbReference type="InterPro" id="IPR005651">
    <property type="entry name" value="Trm112-like"/>
</dbReference>
<dbReference type="PANTHER" id="PTHR33505:SF4">
    <property type="entry name" value="PROTEIN PREY, MITOCHONDRIAL"/>
    <property type="match status" value="1"/>
</dbReference>
<dbReference type="PANTHER" id="PTHR33505">
    <property type="entry name" value="ZGC:162634"/>
    <property type="match status" value="1"/>
</dbReference>
<dbReference type="Pfam" id="PF03966">
    <property type="entry name" value="Trm112p"/>
    <property type="match status" value="1"/>
</dbReference>
<dbReference type="SUPFAM" id="SSF158997">
    <property type="entry name" value="Trm112p-like"/>
    <property type="match status" value="1"/>
</dbReference>